<organism>
    <name type="scientific">Mus musculus</name>
    <name type="common">Mouse</name>
    <dbReference type="NCBI Taxonomy" id="10090"/>
    <lineage>
        <taxon>Eukaryota</taxon>
        <taxon>Metazoa</taxon>
        <taxon>Chordata</taxon>
        <taxon>Craniata</taxon>
        <taxon>Vertebrata</taxon>
        <taxon>Euteleostomi</taxon>
        <taxon>Mammalia</taxon>
        <taxon>Eutheria</taxon>
        <taxon>Euarchontoglires</taxon>
        <taxon>Glires</taxon>
        <taxon>Rodentia</taxon>
        <taxon>Myomorpha</taxon>
        <taxon>Muroidea</taxon>
        <taxon>Muridae</taxon>
        <taxon>Murinae</taxon>
        <taxon>Mus</taxon>
        <taxon>Mus</taxon>
    </lineage>
</organism>
<name>SH2D6_MOUSE</name>
<protein>
    <recommendedName>
        <fullName>SH2 domain-containing protein 6</fullName>
    </recommendedName>
</protein>
<sequence length="297" mass="32016">MSCPPVRVLPVSLAPAQSLGSKDDSLYLDRSGPLDPSKPPLPPPQSTMARGLPINPSFPTRPTSGYHFPLKTAMNPQPAKQGPVFGRQGRGTSARMVTKKPDEDIYLECEPDPVPVLTRSLSSKALIPPVPLPRTSGLPKSVAGYQEARNGAMDGALKAGRRLSASSIAPALSSSVAENGSLLGQPWYSGNCDRQSVERALLHFQKDGAYKVRLSSGPHSSQPFTLAVLLRGRVFNIPIRQLDGGHHYALGREGRNHEELFSSVAAMVQHYTKHPLPLVDGHSGNRGLTYLRFPTKP</sequence>
<dbReference type="EMBL" id="AK016886">
    <property type="protein sequence ID" value="BAB30480.1"/>
    <property type="molecule type" value="mRNA"/>
</dbReference>
<dbReference type="EMBL" id="BC100525">
    <property type="protein sequence ID" value="AAI00526.1"/>
    <property type="status" value="ALT_INIT"/>
    <property type="molecule type" value="mRNA"/>
</dbReference>
<dbReference type="CCDS" id="CCDS90061.1">
    <molecule id="Q9D413-2"/>
</dbReference>
<dbReference type="SMR" id="Q9D413"/>
<dbReference type="FunCoup" id="Q9D413">
    <property type="interactions" value="251"/>
</dbReference>
<dbReference type="STRING" id="10090.ENSMUSP00000124673"/>
<dbReference type="PaxDb" id="10090-ENSMUSP00000124673"/>
<dbReference type="ProteomicsDB" id="257138">
    <molecule id="Q9D413-1"/>
</dbReference>
<dbReference type="ProteomicsDB" id="257139">
    <molecule id="Q9D413-2"/>
</dbReference>
<dbReference type="AGR" id="MGI:1918380"/>
<dbReference type="MGI" id="MGI:1918380">
    <property type="gene designation" value="Sh2d6"/>
</dbReference>
<dbReference type="eggNOG" id="ENOG502SCFD">
    <property type="taxonomic scope" value="Eukaryota"/>
</dbReference>
<dbReference type="InParanoid" id="Q9D413"/>
<dbReference type="PhylomeDB" id="Q9D413"/>
<dbReference type="ChiTaRS" id="Sh2d6">
    <property type="organism name" value="mouse"/>
</dbReference>
<dbReference type="PRO" id="PR:Q9D413"/>
<dbReference type="Proteomes" id="UP000000589">
    <property type="component" value="Unplaced"/>
</dbReference>
<dbReference type="RNAct" id="Q9D413">
    <property type="molecule type" value="protein"/>
</dbReference>
<dbReference type="GO" id="GO:0005737">
    <property type="term" value="C:cytoplasm"/>
    <property type="evidence" value="ECO:0007669"/>
    <property type="project" value="UniProtKB-ARBA"/>
</dbReference>
<dbReference type="FunFam" id="3.30.505.10:FF:000016">
    <property type="entry name" value="B-cell linker protein isoform 2"/>
    <property type="match status" value="1"/>
</dbReference>
<dbReference type="Gene3D" id="3.30.505.10">
    <property type="entry name" value="SH2 domain"/>
    <property type="match status" value="1"/>
</dbReference>
<dbReference type="InterPro" id="IPR051751">
    <property type="entry name" value="Immunoreceptor_sig_adapters"/>
</dbReference>
<dbReference type="InterPro" id="IPR000980">
    <property type="entry name" value="SH2"/>
</dbReference>
<dbReference type="InterPro" id="IPR036860">
    <property type="entry name" value="SH2_dom_sf"/>
</dbReference>
<dbReference type="PANTHER" id="PTHR14098">
    <property type="entry name" value="SH2 DOMAIN CONTAINING PROTEIN"/>
    <property type="match status" value="1"/>
</dbReference>
<dbReference type="PANTHER" id="PTHR14098:SF16">
    <property type="entry name" value="SH2 DOMAIN-CONTAINING PROTEIN 6"/>
    <property type="match status" value="1"/>
</dbReference>
<dbReference type="Pfam" id="PF00017">
    <property type="entry name" value="SH2"/>
    <property type="match status" value="1"/>
</dbReference>
<dbReference type="PRINTS" id="PR00401">
    <property type="entry name" value="SH2DOMAIN"/>
</dbReference>
<dbReference type="SMART" id="SM00252">
    <property type="entry name" value="SH2"/>
    <property type="match status" value="1"/>
</dbReference>
<dbReference type="SUPFAM" id="SSF55550">
    <property type="entry name" value="SH2 domain"/>
    <property type="match status" value="1"/>
</dbReference>
<dbReference type="PROSITE" id="PS50001">
    <property type="entry name" value="SH2"/>
    <property type="match status" value="1"/>
</dbReference>
<comment type="alternative products">
    <event type="alternative splicing"/>
    <isoform>
        <id>Q9D413-1</id>
        <name>1</name>
        <sequence type="displayed"/>
    </isoform>
    <isoform>
        <id>Q9D413-2</id>
        <name>2</name>
        <sequence type="described" ref="VSP_029016"/>
    </isoform>
</comment>
<comment type="sequence caution" evidence="4">
    <conflict type="erroneous initiation">
        <sequence resource="EMBL-CDS" id="AAI00526"/>
    </conflict>
</comment>
<reference key="1">
    <citation type="journal article" date="2005" name="Science">
        <title>The transcriptional landscape of the mammalian genome.</title>
        <authorList>
            <person name="Carninci P."/>
            <person name="Kasukawa T."/>
            <person name="Katayama S."/>
            <person name="Gough J."/>
            <person name="Frith M.C."/>
            <person name="Maeda N."/>
            <person name="Oyama R."/>
            <person name="Ravasi T."/>
            <person name="Lenhard B."/>
            <person name="Wells C."/>
            <person name="Kodzius R."/>
            <person name="Shimokawa K."/>
            <person name="Bajic V.B."/>
            <person name="Brenner S.E."/>
            <person name="Batalov S."/>
            <person name="Forrest A.R."/>
            <person name="Zavolan M."/>
            <person name="Davis M.J."/>
            <person name="Wilming L.G."/>
            <person name="Aidinis V."/>
            <person name="Allen J.E."/>
            <person name="Ambesi-Impiombato A."/>
            <person name="Apweiler R."/>
            <person name="Aturaliya R.N."/>
            <person name="Bailey T.L."/>
            <person name="Bansal M."/>
            <person name="Baxter L."/>
            <person name="Beisel K.W."/>
            <person name="Bersano T."/>
            <person name="Bono H."/>
            <person name="Chalk A.M."/>
            <person name="Chiu K.P."/>
            <person name="Choudhary V."/>
            <person name="Christoffels A."/>
            <person name="Clutterbuck D.R."/>
            <person name="Crowe M.L."/>
            <person name="Dalla E."/>
            <person name="Dalrymple B.P."/>
            <person name="de Bono B."/>
            <person name="Della Gatta G."/>
            <person name="di Bernardo D."/>
            <person name="Down T."/>
            <person name="Engstrom P."/>
            <person name="Fagiolini M."/>
            <person name="Faulkner G."/>
            <person name="Fletcher C.F."/>
            <person name="Fukushima T."/>
            <person name="Furuno M."/>
            <person name="Futaki S."/>
            <person name="Gariboldi M."/>
            <person name="Georgii-Hemming P."/>
            <person name="Gingeras T.R."/>
            <person name="Gojobori T."/>
            <person name="Green R.E."/>
            <person name="Gustincich S."/>
            <person name="Harbers M."/>
            <person name="Hayashi Y."/>
            <person name="Hensch T.K."/>
            <person name="Hirokawa N."/>
            <person name="Hill D."/>
            <person name="Huminiecki L."/>
            <person name="Iacono M."/>
            <person name="Ikeo K."/>
            <person name="Iwama A."/>
            <person name="Ishikawa T."/>
            <person name="Jakt M."/>
            <person name="Kanapin A."/>
            <person name="Katoh M."/>
            <person name="Kawasawa Y."/>
            <person name="Kelso J."/>
            <person name="Kitamura H."/>
            <person name="Kitano H."/>
            <person name="Kollias G."/>
            <person name="Krishnan S.P."/>
            <person name="Kruger A."/>
            <person name="Kummerfeld S.K."/>
            <person name="Kurochkin I.V."/>
            <person name="Lareau L.F."/>
            <person name="Lazarevic D."/>
            <person name="Lipovich L."/>
            <person name="Liu J."/>
            <person name="Liuni S."/>
            <person name="McWilliam S."/>
            <person name="Madan Babu M."/>
            <person name="Madera M."/>
            <person name="Marchionni L."/>
            <person name="Matsuda H."/>
            <person name="Matsuzawa S."/>
            <person name="Miki H."/>
            <person name="Mignone F."/>
            <person name="Miyake S."/>
            <person name="Morris K."/>
            <person name="Mottagui-Tabar S."/>
            <person name="Mulder N."/>
            <person name="Nakano N."/>
            <person name="Nakauchi H."/>
            <person name="Ng P."/>
            <person name="Nilsson R."/>
            <person name="Nishiguchi S."/>
            <person name="Nishikawa S."/>
            <person name="Nori F."/>
            <person name="Ohara O."/>
            <person name="Okazaki Y."/>
            <person name="Orlando V."/>
            <person name="Pang K.C."/>
            <person name="Pavan W.J."/>
            <person name="Pavesi G."/>
            <person name="Pesole G."/>
            <person name="Petrovsky N."/>
            <person name="Piazza S."/>
            <person name="Reed J."/>
            <person name="Reid J.F."/>
            <person name="Ring B.Z."/>
            <person name="Ringwald M."/>
            <person name="Rost B."/>
            <person name="Ruan Y."/>
            <person name="Salzberg S.L."/>
            <person name="Sandelin A."/>
            <person name="Schneider C."/>
            <person name="Schoenbach C."/>
            <person name="Sekiguchi K."/>
            <person name="Semple C.A."/>
            <person name="Seno S."/>
            <person name="Sessa L."/>
            <person name="Sheng Y."/>
            <person name="Shibata Y."/>
            <person name="Shimada H."/>
            <person name="Shimada K."/>
            <person name="Silva D."/>
            <person name="Sinclair B."/>
            <person name="Sperling S."/>
            <person name="Stupka E."/>
            <person name="Sugiura K."/>
            <person name="Sultana R."/>
            <person name="Takenaka Y."/>
            <person name="Taki K."/>
            <person name="Tammoja K."/>
            <person name="Tan S.L."/>
            <person name="Tang S."/>
            <person name="Taylor M.S."/>
            <person name="Tegner J."/>
            <person name="Teichmann S.A."/>
            <person name="Ueda H.R."/>
            <person name="van Nimwegen E."/>
            <person name="Verardo R."/>
            <person name="Wei C.L."/>
            <person name="Yagi K."/>
            <person name="Yamanishi H."/>
            <person name="Zabarovsky E."/>
            <person name="Zhu S."/>
            <person name="Zimmer A."/>
            <person name="Hide W."/>
            <person name="Bult C."/>
            <person name="Grimmond S.M."/>
            <person name="Teasdale R.D."/>
            <person name="Liu E.T."/>
            <person name="Brusic V."/>
            <person name="Quackenbush J."/>
            <person name="Wahlestedt C."/>
            <person name="Mattick J.S."/>
            <person name="Hume D.A."/>
            <person name="Kai C."/>
            <person name="Sasaki D."/>
            <person name="Tomaru Y."/>
            <person name="Fukuda S."/>
            <person name="Kanamori-Katayama M."/>
            <person name="Suzuki M."/>
            <person name="Aoki J."/>
            <person name="Arakawa T."/>
            <person name="Iida J."/>
            <person name="Imamura K."/>
            <person name="Itoh M."/>
            <person name="Kato T."/>
            <person name="Kawaji H."/>
            <person name="Kawagashira N."/>
            <person name="Kawashima T."/>
            <person name="Kojima M."/>
            <person name="Kondo S."/>
            <person name="Konno H."/>
            <person name="Nakano K."/>
            <person name="Ninomiya N."/>
            <person name="Nishio T."/>
            <person name="Okada M."/>
            <person name="Plessy C."/>
            <person name="Shibata K."/>
            <person name="Shiraki T."/>
            <person name="Suzuki S."/>
            <person name="Tagami M."/>
            <person name="Waki K."/>
            <person name="Watahiki A."/>
            <person name="Okamura-Oho Y."/>
            <person name="Suzuki H."/>
            <person name="Kawai J."/>
            <person name="Hayashizaki Y."/>
        </authorList>
    </citation>
    <scope>NUCLEOTIDE SEQUENCE [LARGE SCALE MRNA] (ISOFORM 1)</scope>
    <source>
        <strain>C57BL/6J</strain>
        <tissue>Testis</tissue>
    </source>
</reference>
<reference key="2">
    <citation type="journal article" date="2004" name="Genome Res.">
        <title>The status, quality, and expansion of the NIH full-length cDNA project: the Mammalian Gene Collection (MGC).</title>
        <authorList>
            <consortium name="The MGC Project Team"/>
        </authorList>
    </citation>
    <scope>NUCLEOTIDE SEQUENCE [LARGE SCALE MRNA] (ISOFORM 2)</scope>
    <source>
        <tissue>Testis</tissue>
    </source>
</reference>
<evidence type="ECO:0000255" key="1">
    <source>
        <dbReference type="PROSITE-ProRule" id="PRU00191"/>
    </source>
</evidence>
<evidence type="ECO:0000256" key="2">
    <source>
        <dbReference type="SAM" id="MobiDB-lite"/>
    </source>
</evidence>
<evidence type="ECO:0000303" key="3">
    <source>
    </source>
</evidence>
<evidence type="ECO:0000305" key="4"/>
<accession>Q9D413</accession>
<accession>Q497J3</accession>
<proteinExistence type="evidence at transcript level"/>
<gene>
    <name type="primary">Sh2d6</name>
</gene>
<feature type="chain" id="PRO_0000308604" description="SH2 domain-containing protein 6">
    <location>
        <begin position="1"/>
        <end position="297"/>
    </location>
</feature>
<feature type="domain" description="SH2" evidence="1">
    <location>
        <begin position="187"/>
        <end position="295"/>
    </location>
</feature>
<feature type="region of interest" description="Disordered" evidence="2">
    <location>
        <begin position="1"/>
        <end position="61"/>
    </location>
</feature>
<feature type="region of interest" description="Disordered" evidence="2">
    <location>
        <begin position="74"/>
        <end position="93"/>
    </location>
</feature>
<feature type="compositionally biased region" description="Pro residues" evidence="2">
    <location>
        <begin position="36"/>
        <end position="45"/>
    </location>
</feature>
<feature type="splice variant" id="VSP_029016" description="In isoform 2." evidence="3">
    <location>
        <begin position="1"/>
        <end position="47"/>
    </location>
</feature>
<feature type="sequence conflict" description="In Ref. 2; AAI00526." evidence="4" ref="2">
    <original>K</original>
    <variation>T</variation>
    <location>
        <position position="211"/>
    </location>
</feature>
<keyword id="KW-0025">Alternative splicing</keyword>
<keyword id="KW-1185">Reference proteome</keyword>
<keyword id="KW-0727">SH2 domain</keyword>